<organism>
    <name type="scientific">Dictyostelium discoideum</name>
    <name type="common">Social amoeba</name>
    <dbReference type="NCBI Taxonomy" id="44689"/>
    <lineage>
        <taxon>Eukaryota</taxon>
        <taxon>Amoebozoa</taxon>
        <taxon>Evosea</taxon>
        <taxon>Eumycetozoa</taxon>
        <taxon>Dictyostelia</taxon>
        <taxon>Dictyosteliales</taxon>
        <taxon>Dictyosteliaceae</taxon>
        <taxon>Dictyostelium</taxon>
    </lineage>
</organism>
<comment type="function">
    <text>Has a large extracellular domain which may be involved in the recognition of an extracellular signal present during germination, leading to activation or inhibition of cAMP synthesis by the cytoplasmic domain.</text>
</comment>
<comment type="catalytic activity">
    <reaction>
        <text>ATP = 3',5'-cyclic AMP + diphosphate</text>
        <dbReference type="Rhea" id="RHEA:15389"/>
        <dbReference type="ChEBI" id="CHEBI:30616"/>
        <dbReference type="ChEBI" id="CHEBI:33019"/>
        <dbReference type="ChEBI" id="CHEBI:58165"/>
        <dbReference type="EC" id="4.6.1.1"/>
    </reaction>
</comment>
<comment type="activity regulation">
    <text>Insensitive to guanine nucleotides.</text>
</comment>
<comment type="subcellular location">
    <subcellularLocation>
        <location>Membrane</location>
        <topology>Single-pass type II membrane protein</topology>
    </subcellularLocation>
</comment>
<comment type="developmental stage">
    <text>After fruiting bodies have been formed and during germination.</text>
</comment>
<comment type="similarity">
    <text evidence="3">Belongs to the adenylyl cyclase class-4/guanylyl cyclase family.</text>
</comment>
<keyword id="KW-0067">ATP-binding</keyword>
<keyword id="KW-0115">cAMP biosynthesis</keyword>
<keyword id="KW-0309">Germination</keyword>
<keyword id="KW-0456">Lyase</keyword>
<keyword id="KW-0460">Magnesium</keyword>
<keyword id="KW-0472">Membrane</keyword>
<keyword id="KW-0479">Metal-binding</keyword>
<keyword id="KW-0547">Nucleotide-binding</keyword>
<keyword id="KW-1185">Reference proteome</keyword>
<keyword id="KW-0735">Signal-anchor</keyword>
<keyword id="KW-0812">Transmembrane</keyword>
<keyword id="KW-1133">Transmembrane helix</keyword>
<dbReference type="EC" id="4.6.1.1"/>
<dbReference type="EMBL" id="M87278">
    <property type="protein sequence ID" value="AAA33164.1"/>
    <property type="molecule type" value="Genomic_DNA"/>
</dbReference>
<dbReference type="EMBL" id="AAFI02000012">
    <property type="protein sequence ID" value="EAL70177.1"/>
    <property type="molecule type" value="Genomic_DNA"/>
</dbReference>
<dbReference type="PIR" id="A42239">
    <property type="entry name" value="A42239"/>
</dbReference>
<dbReference type="RefSeq" id="XP_643956.1">
    <property type="nucleotide sequence ID" value="XM_638864.1"/>
</dbReference>
<dbReference type="SMR" id="Q03101"/>
<dbReference type="FunCoup" id="Q03101">
    <property type="interactions" value="37"/>
</dbReference>
<dbReference type="STRING" id="44689.Q03101"/>
<dbReference type="PaxDb" id="44689-DDB0185013"/>
<dbReference type="EnsemblProtists" id="EAL70177">
    <property type="protein sequence ID" value="EAL70177"/>
    <property type="gene ID" value="DDB_G0274569"/>
</dbReference>
<dbReference type="GeneID" id="8619384"/>
<dbReference type="KEGG" id="ddi:DDB_G0274569"/>
<dbReference type="dictyBase" id="DDB_G0274569">
    <property type="gene designation" value="acgA"/>
</dbReference>
<dbReference type="VEuPathDB" id="AmoebaDB:DDB_G0274569"/>
<dbReference type="eggNOG" id="KOG1023">
    <property type="taxonomic scope" value="Eukaryota"/>
</dbReference>
<dbReference type="HOGENOM" id="CLU_333294_0_0_1"/>
<dbReference type="InParanoid" id="Q03101"/>
<dbReference type="OMA" id="FSERCDI"/>
<dbReference type="Reactome" id="R-DDI-2514859">
    <property type="pathway name" value="Inactivation, recovery and regulation of the phototransduction cascade"/>
</dbReference>
<dbReference type="PRO" id="PR:Q03101"/>
<dbReference type="Proteomes" id="UP000002195">
    <property type="component" value="Chromosome 2"/>
</dbReference>
<dbReference type="GO" id="GO:0005886">
    <property type="term" value="C:plasma membrane"/>
    <property type="evidence" value="ECO:0000314"/>
    <property type="project" value="dictyBase"/>
</dbReference>
<dbReference type="GO" id="GO:0004016">
    <property type="term" value="F:adenylate cyclase activity"/>
    <property type="evidence" value="ECO:0000314"/>
    <property type="project" value="dictyBase"/>
</dbReference>
<dbReference type="GO" id="GO:0005524">
    <property type="term" value="F:ATP binding"/>
    <property type="evidence" value="ECO:0007669"/>
    <property type="project" value="UniProtKB-KW"/>
</dbReference>
<dbReference type="GO" id="GO:0042802">
    <property type="term" value="F:identical protein binding"/>
    <property type="evidence" value="ECO:0000353"/>
    <property type="project" value="dictyBase"/>
</dbReference>
<dbReference type="GO" id="GO:0046872">
    <property type="term" value="F:metal ion binding"/>
    <property type="evidence" value="ECO:0007669"/>
    <property type="project" value="UniProtKB-KW"/>
</dbReference>
<dbReference type="GO" id="GO:0005034">
    <property type="term" value="F:osmosensor activity"/>
    <property type="evidence" value="ECO:0000314"/>
    <property type="project" value="dictyBase"/>
</dbReference>
<dbReference type="GO" id="GO:0001653">
    <property type="term" value="F:peptide receptor activity"/>
    <property type="evidence" value="ECO:0000318"/>
    <property type="project" value="GO_Central"/>
</dbReference>
<dbReference type="GO" id="GO:0019887">
    <property type="term" value="F:protein kinase regulator activity"/>
    <property type="evidence" value="ECO:0000315"/>
    <property type="project" value="dictyBase"/>
</dbReference>
<dbReference type="GO" id="GO:0006171">
    <property type="term" value="P:cAMP biosynthetic process"/>
    <property type="evidence" value="ECO:0007669"/>
    <property type="project" value="UniProtKB-KW"/>
</dbReference>
<dbReference type="GO" id="GO:0071470">
    <property type="term" value="P:cellular response to osmotic stress"/>
    <property type="evidence" value="ECO:0000315"/>
    <property type="project" value="dictyBase"/>
</dbReference>
<dbReference type="GO" id="GO:0009992">
    <property type="term" value="P:intracellular water homeostasis"/>
    <property type="evidence" value="ECO:0000314"/>
    <property type="project" value="dictyBase"/>
</dbReference>
<dbReference type="GO" id="GO:1904360">
    <property type="term" value="P:negative regulation of spore germination"/>
    <property type="evidence" value="ECO:0000315"/>
    <property type="project" value="dictyBase"/>
</dbReference>
<dbReference type="GO" id="GO:0007231">
    <property type="term" value="P:osmosensory signaling pathway"/>
    <property type="evidence" value="ECO:0000315"/>
    <property type="project" value="dictyBase"/>
</dbReference>
<dbReference type="GO" id="GO:0010447">
    <property type="term" value="P:response to acidic pH"/>
    <property type="evidence" value="ECO:0000314"/>
    <property type="project" value="dictyBase"/>
</dbReference>
<dbReference type="GO" id="GO:0031000">
    <property type="term" value="P:response to caffeine"/>
    <property type="evidence" value="ECO:0000314"/>
    <property type="project" value="dictyBase"/>
</dbReference>
<dbReference type="GO" id="GO:0006970">
    <property type="term" value="P:response to osmotic stress"/>
    <property type="evidence" value="ECO:0000315"/>
    <property type="project" value="dictyBase"/>
</dbReference>
<dbReference type="GO" id="GO:0007165">
    <property type="term" value="P:signal transduction"/>
    <property type="evidence" value="ECO:0000315"/>
    <property type="project" value="dictyBase"/>
</dbReference>
<dbReference type="GO" id="GO:0030435">
    <property type="term" value="P:sporulation resulting in formation of a cellular spore"/>
    <property type="evidence" value="ECO:0000314"/>
    <property type="project" value="dictyBase"/>
</dbReference>
<dbReference type="CDD" id="cd07302">
    <property type="entry name" value="CHD"/>
    <property type="match status" value="1"/>
</dbReference>
<dbReference type="FunFam" id="3.30.70.1230:FF:000033">
    <property type="entry name" value="Adenylate cyclase"/>
    <property type="match status" value="1"/>
</dbReference>
<dbReference type="Gene3D" id="3.30.450.350">
    <property type="entry name" value="CHASE domain"/>
    <property type="match status" value="1"/>
</dbReference>
<dbReference type="Gene3D" id="3.30.70.1230">
    <property type="entry name" value="Nucleotide cyclase"/>
    <property type="match status" value="1"/>
</dbReference>
<dbReference type="InterPro" id="IPR001054">
    <property type="entry name" value="A/G_cyclase"/>
</dbReference>
<dbReference type="InterPro" id="IPR018297">
    <property type="entry name" value="A/G_cyclase_CS"/>
</dbReference>
<dbReference type="InterPro" id="IPR006189">
    <property type="entry name" value="CHASE_dom"/>
</dbReference>
<dbReference type="InterPro" id="IPR042240">
    <property type="entry name" value="CHASE_sf"/>
</dbReference>
<dbReference type="InterPro" id="IPR050401">
    <property type="entry name" value="Cyclic_nucleotide_synthase"/>
</dbReference>
<dbReference type="InterPro" id="IPR029787">
    <property type="entry name" value="Nucleotide_cyclase"/>
</dbReference>
<dbReference type="PANTHER" id="PTHR11920:SF487">
    <property type="entry name" value="ADENYLATE CYCLASE, GERMINATION SPECIFIC"/>
    <property type="match status" value="1"/>
</dbReference>
<dbReference type="PANTHER" id="PTHR11920">
    <property type="entry name" value="GUANYLYL CYCLASE"/>
    <property type="match status" value="1"/>
</dbReference>
<dbReference type="Pfam" id="PF03924">
    <property type="entry name" value="CHASE"/>
    <property type="match status" value="1"/>
</dbReference>
<dbReference type="Pfam" id="PF00211">
    <property type="entry name" value="Guanylate_cyc"/>
    <property type="match status" value="1"/>
</dbReference>
<dbReference type="SMART" id="SM01079">
    <property type="entry name" value="CHASE"/>
    <property type="match status" value="1"/>
</dbReference>
<dbReference type="SMART" id="SM00044">
    <property type="entry name" value="CYCc"/>
    <property type="match status" value="1"/>
</dbReference>
<dbReference type="SUPFAM" id="SSF55073">
    <property type="entry name" value="Nucleotide cyclase"/>
    <property type="match status" value="1"/>
</dbReference>
<dbReference type="PROSITE" id="PS50839">
    <property type="entry name" value="CHASE"/>
    <property type="match status" value="1"/>
</dbReference>
<dbReference type="PROSITE" id="PS00452">
    <property type="entry name" value="GUANYLATE_CYCLASE_1"/>
    <property type="match status" value="1"/>
</dbReference>
<dbReference type="PROSITE" id="PS50125">
    <property type="entry name" value="GUANYLATE_CYCLASE_2"/>
    <property type="match status" value="1"/>
</dbReference>
<accession>Q03101</accession>
<accession>Q555V4</accession>
<accession>Q86A89</accession>
<sequence length="858" mass="98380">MKKTFVKILSKSYVEGYPVGFFIGLIILAIFGSMVCIFSFMHYSEEENSNIQMDLERSSKQIIHNIQMNAMYLLSSIDTLKALYYVNPNFDRNDFNVFLNTTLKNSEFQYLFWIKKINNNDRNCFEEKFSKEIKDTFQIYSFDENTNSIHVAKNKSSYFPILHAFPDINKDIIGLDINSTDYMNETIKKSIFNKKPTVHLNKKVLLSKRNIDILIVSPIIVTKTLESTNETMEDMSHISSGLFLMEKNVQASRIEVENGNDFTIFLSTTNGEIVYQENYLNFKTLYQVHESGLFEDRLKYESSLKIADCVLKLWIFTTEEYENNSKTYLPLLVSIISAVILVLLITYSVDQRKQKSLIAKIMREKNNLINKILPLEVSVKLENGEDVVAERSNNACVFFLDIAGFTRFSSIHSPEQVIQVLIKIFNSMDLLCAKHGIEKIKTIGDAYMATCGIFPKCDDIRHNTYKMLGFAMDVLEFIPKEMSFHLGLQVRVGIHCGPVISGVISGYAKPHFDVWGDTVNVASRMESTGIAGQIHVSDRVYQLGKEDFNFSERCDIIHVKGKGRMKTWYLMGKKSSDFSLKKDFSRSRVQPSLFNRKQSHVHCIYPEFPSGLQALNIENNLNNTDAGCENCSKILKKTYAYSPDHSTSNYYYHGDDNSPPPPSLNSNDLIDGSEYHDDPFPSDSNVGYHDTSKDIKEDENEQNETLLFNQEQLKKKQIENIQRDLSLNDSIEAIKILNNNNNNNINDNNINNTNLNNNNNDININNSDNVNNYENNNNFSDKIENNDGDNNNINDNNYKSTNENNIKSKTLFKDSKSLINDIKMAKENCDNNDDNNNNNNNNNNNNNNDENVESKKNK</sequence>
<reference key="1">
    <citation type="journal article" date="1992" name="Cell">
        <title>Structurally distinct and stage-specific adenylyl cyclase genes play different roles in Dictyostelium development.</title>
        <authorList>
            <person name="Pitt G.S."/>
            <person name="Milona N."/>
            <person name="Borleis J."/>
            <person name="Lin K.C."/>
            <person name="Reed R.R."/>
            <person name="Devreotes P.N."/>
        </authorList>
    </citation>
    <scope>NUCLEOTIDE SEQUENCE [GENOMIC DNA]</scope>
</reference>
<reference key="2">
    <citation type="journal article" date="2002" name="Nature">
        <title>Sequence and analysis of chromosome 2 of Dictyostelium discoideum.</title>
        <authorList>
            <person name="Gloeckner G."/>
            <person name="Eichinger L."/>
            <person name="Szafranski K."/>
            <person name="Pachebat J.A."/>
            <person name="Bankier A.T."/>
            <person name="Dear P.H."/>
            <person name="Lehmann R."/>
            <person name="Baumgart C."/>
            <person name="Parra G."/>
            <person name="Abril J.F."/>
            <person name="Guigo R."/>
            <person name="Kumpf K."/>
            <person name="Tunggal B."/>
            <person name="Cox E.C."/>
            <person name="Quail M.A."/>
            <person name="Platzer M."/>
            <person name="Rosenthal A."/>
            <person name="Noegel A.A."/>
        </authorList>
    </citation>
    <scope>NUCLEOTIDE SEQUENCE [LARGE SCALE GENOMIC DNA]</scope>
    <source>
        <strain>AX4</strain>
    </source>
</reference>
<reference key="3">
    <citation type="journal article" date="2005" name="Nature">
        <title>The genome of the social amoeba Dictyostelium discoideum.</title>
        <authorList>
            <person name="Eichinger L."/>
            <person name="Pachebat J.A."/>
            <person name="Gloeckner G."/>
            <person name="Rajandream M.A."/>
            <person name="Sucgang R."/>
            <person name="Berriman M."/>
            <person name="Song J."/>
            <person name="Olsen R."/>
            <person name="Szafranski K."/>
            <person name="Xu Q."/>
            <person name="Tunggal B."/>
            <person name="Kummerfeld S."/>
            <person name="Madera M."/>
            <person name="Konfortov B.A."/>
            <person name="Rivero F."/>
            <person name="Bankier A.T."/>
            <person name="Lehmann R."/>
            <person name="Hamlin N."/>
            <person name="Davies R."/>
            <person name="Gaudet P."/>
            <person name="Fey P."/>
            <person name="Pilcher K."/>
            <person name="Chen G."/>
            <person name="Saunders D."/>
            <person name="Sodergren E.J."/>
            <person name="Davis P."/>
            <person name="Kerhornou A."/>
            <person name="Nie X."/>
            <person name="Hall N."/>
            <person name="Anjard C."/>
            <person name="Hemphill L."/>
            <person name="Bason N."/>
            <person name="Farbrother P."/>
            <person name="Desany B."/>
            <person name="Just E."/>
            <person name="Morio T."/>
            <person name="Rost R."/>
            <person name="Churcher C.M."/>
            <person name="Cooper J."/>
            <person name="Haydock S."/>
            <person name="van Driessche N."/>
            <person name="Cronin A."/>
            <person name="Goodhead I."/>
            <person name="Muzny D.M."/>
            <person name="Mourier T."/>
            <person name="Pain A."/>
            <person name="Lu M."/>
            <person name="Harper D."/>
            <person name="Lindsay R."/>
            <person name="Hauser H."/>
            <person name="James K.D."/>
            <person name="Quiles M."/>
            <person name="Madan Babu M."/>
            <person name="Saito T."/>
            <person name="Buchrieser C."/>
            <person name="Wardroper A."/>
            <person name="Felder M."/>
            <person name="Thangavelu M."/>
            <person name="Johnson D."/>
            <person name="Knights A."/>
            <person name="Loulseged H."/>
            <person name="Mungall K.L."/>
            <person name="Oliver K."/>
            <person name="Price C."/>
            <person name="Quail M.A."/>
            <person name="Urushihara H."/>
            <person name="Hernandez J."/>
            <person name="Rabbinowitsch E."/>
            <person name="Steffen D."/>
            <person name="Sanders M."/>
            <person name="Ma J."/>
            <person name="Kohara Y."/>
            <person name="Sharp S."/>
            <person name="Simmonds M.N."/>
            <person name="Spiegler S."/>
            <person name="Tivey A."/>
            <person name="Sugano S."/>
            <person name="White B."/>
            <person name="Walker D."/>
            <person name="Woodward J.R."/>
            <person name="Winckler T."/>
            <person name="Tanaka Y."/>
            <person name="Shaulsky G."/>
            <person name="Schleicher M."/>
            <person name="Weinstock G.M."/>
            <person name="Rosenthal A."/>
            <person name="Cox E.C."/>
            <person name="Chisholm R.L."/>
            <person name="Gibbs R.A."/>
            <person name="Loomis W.F."/>
            <person name="Platzer M."/>
            <person name="Kay R.R."/>
            <person name="Williams J.G."/>
            <person name="Dear P.H."/>
            <person name="Noegel A.A."/>
            <person name="Barrell B.G."/>
            <person name="Kuspa A."/>
        </authorList>
    </citation>
    <scope>NUCLEOTIDE SEQUENCE [LARGE SCALE GENOMIC DNA]</scope>
    <source>
        <strain>AX4</strain>
    </source>
</reference>
<reference key="4">
    <citation type="journal article" date="1997" name="Proc. Natl. Acad. Sci. U.S.A.">
        <title>Catalytic mechanism of the adenylyl and guanylyl cyclases: modeling and mutational analysis.</title>
        <authorList>
            <person name="Liu Y."/>
            <person name="Ruoho A.E."/>
            <person name="Rao V.D."/>
            <person name="Hurley J.H."/>
        </authorList>
    </citation>
    <scope>3D-STRUCTURE MODELING OF 387-543</scope>
</reference>
<evidence type="ECO:0000255" key="1"/>
<evidence type="ECO:0000255" key="2">
    <source>
        <dbReference type="PROSITE-ProRule" id="PRU00049"/>
    </source>
</evidence>
<evidence type="ECO:0000255" key="3">
    <source>
        <dbReference type="PROSITE-ProRule" id="PRU00099"/>
    </source>
</evidence>
<evidence type="ECO:0000256" key="4">
    <source>
        <dbReference type="SAM" id="MobiDB-lite"/>
    </source>
</evidence>
<evidence type="ECO:0000305" key="5"/>
<gene>
    <name type="primary">acgA</name>
    <name type="synonym">acg</name>
    <name type="ORF">DDB_G0274569</name>
</gene>
<protein>
    <recommendedName>
        <fullName>Adenylate cyclase, germination specific</fullName>
        <ecNumber>4.6.1.1</ecNumber>
    </recommendedName>
    <alternativeName>
        <fullName>ATP pyrophosphate-lyase</fullName>
    </alternativeName>
    <alternativeName>
        <fullName>Adenylyl cyclase</fullName>
    </alternativeName>
</protein>
<feature type="chain" id="PRO_0000195715" description="Adenylate cyclase, germination specific">
    <location>
        <begin position="1"/>
        <end position="858"/>
    </location>
</feature>
<feature type="topological domain" description="Cytoplasmic" evidence="1">
    <location>
        <begin position="1"/>
        <end position="18"/>
    </location>
</feature>
<feature type="transmembrane region" description="Helical; Signal-anchor for type II membrane protein" evidence="1">
    <location>
        <begin position="19"/>
        <end position="41"/>
    </location>
</feature>
<feature type="topological domain" description="Extracellular" evidence="1">
    <location>
        <begin position="42"/>
        <end position="858"/>
    </location>
</feature>
<feature type="domain" description="CHASE" evidence="2">
    <location>
        <begin position="86"/>
        <end position="317"/>
    </location>
</feature>
<feature type="domain" description="Guanylate cyclase" evidence="3">
    <location>
        <begin position="396"/>
        <end position="526"/>
    </location>
</feature>
<feature type="region of interest" description="Disordered" evidence="4">
    <location>
        <begin position="650"/>
        <end position="691"/>
    </location>
</feature>
<feature type="region of interest" description="Disordered" evidence="4">
    <location>
        <begin position="767"/>
        <end position="803"/>
    </location>
</feature>
<feature type="region of interest" description="Disordered" evidence="4">
    <location>
        <begin position="827"/>
        <end position="858"/>
    </location>
</feature>
<feature type="compositionally biased region" description="Low complexity" evidence="4">
    <location>
        <begin position="767"/>
        <end position="778"/>
    </location>
</feature>
<feature type="compositionally biased region" description="Low complexity" evidence="4">
    <location>
        <begin position="788"/>
        <end position="797"/>
    </location>
</feature>
<feature type="compositionally biased region" description="Low complexity" evidence="4">
    <location>
        <begin position="834"/>
        <end position="849"/>
    </location>
</feature>
<feature type="binding site" evidence="3">
    <location>
        <position position="401"/>
    </location>
    <ligand>
        <name>Mg(2+)</name>
        <dbReference type="ChEBI" id="CHEBI:18420"/>
        <label>1</label>
    </ligand>
</feature>
<feature type="binding site" evidence="3">
    <location>
        <position position="401"/>
    </location>
    <ligand>
        <name>Mg(2+)</name>
        <dbReference type="ChEBI" id="CHEBI:18420"/>
        <label>2</label>
    </ligand>
</feature>
<feature type="binding site" evidence="3">
    <location>
        <position position="402"/>
    </location>
    <ligand>
        <name>Mg(2+)</name>
        <dbReference type="ChEBI" id="CHEBI:18420"/>
        <label>2</label>
    </ligand>
</feature>
<feature type="binding site" evidence="3">
    <location>
        <position position="445"/>
    </location>
    <ligand>
        <name>Mg(2+)</name>
        <dbReference type="ChEBI" id="CHEBI:18420"/>
        <label>1</label>
    </ligand>
</feature>
<feature type="binding site" evidence="3">
    <location>
        <position position="445"/>
    </location>
    <ligand>
        <name>Mg(2+)</name>
        <dbReference type="ChEBI" id="CHEBI:18420"/>
        <label>2</label>
    </ligand>
</feature>
<feature type="sequence conflict" description="In Ref. 1; AAA33164." evidence="5" ref="1">
    <original>L</original>
    <variation>F</variation>
    <location>
        <position position="755"/>
    </location>
</feature>
<name>CYAG_DICDI</name>
<proteinExistence type="evidence at transcript level"/>